<protein>
    <recommendedName>
        <fullName>Ferredoxin-3</fullName>
    </recommendedName>
    <alternativeName>
        <fullName>Ferredoxin III</fullName>
        <shortName>FdIII</shortName>
    </alternativeName>
</protein>
<organism>
    <name type="scientific">Nostoc sp. (strain PCC 7120 / SAG 25.82 / UTEX 2576)</name>
    <dbReference type="NCBI Taxonomy" id="103690"/>
    <lineage>
        <taxon>Bacteria</taxon>
        <taxon>Bacillati</taxon>
        <taxon>Cyanobacteriota</taxon>
        <taxon>Cyanophyceae</taxon>
        <taxon>Nostocales</taxon>
        <taxon>Nostocaceae</taxon>
        <taxon>Nostoc</taxon>
    </lineage>
</organism>
<comment type="function">
    <text>Ferredoxins are iron-sulfur proteins that transfer electrons in a wide variety of metabolic reactions.</text>
</comment>
<comment type="cofactor">
    <cofactor evidence="1">
        <name>[4Fe-4S] cluster</name>
        <dbReference type="ChEBI" id="CHEBI:49883"/>
    </cofactor>
    <text evidence="1">Binds 2 [4Fe-4S] clusters.</text>
</comment>
<comment type="subunit">
    <text evidence="1">Homodimer.</text>
</comment>
<reference key="1">
    <citation type="journal article" date="2001" name="DNA Res.">
        <title>Complete genomic sequence of the filamentous nitrogen-fixing cyanobacterium Anabaena sp. strain PCC 7120.</title>
        <authorList>
            <person name="Kaneko T."/>
            <person name="Nakamura Y."/>
            <person name="Wolk C.P."/>
            <person name="Kuritz T."/>
            <person name="Sasamoto S."/>
            <person name="Watanabe A."/>
            <person name="Iriguchi M."/>
            <person name="Ishikawa A."/>
            <person name="Kawashima K."/>
            <person name="Kimura T."/>
            <person name="Kishida Y."/>
            <person name="Kohara M."/>
            <person name="Matsumoto M."/>
            <person name="Matsuno A."/>
            <person name="Muraki A."/>
            <person name="Nakazaki N."/>
            <person name="Shimpo S."/>
            <person name="Sugimoto M."/>
            <person name="Takazawa M."/>
            <person name="Yamada M."/>
            <person name="Yasuda M."/>
            <person name="Tabata S."/>
        </authorList>
    </citation>
    <scope>NUCLEOTIDE SEQUENCE [LARGE SCALE GENOMIC DNA]</scope>
    <source>
        <strain>PCC 7120 / SAG 25.82 / UTEX 2576</strain>
    </source>
</reference>
<proteinExistence type="inferred from homology"/>
<dbReference type="EMBL" id="BA000019">
    <property type="protein sequence ID" value="BAB74212.1"/>
    <property type="molecule type" value="Genomic_DNA"/>
</dbReference>
<dbReference type="PIR" id="AB2120">
    <property type="entry name" value="AB2120"/>
</dbReference>
<dbReference type="RefSeq" id="WP_010996669.1">
    <property type="nucleotide sequence ID" value="NZ_RSCN01000002.1"/>
</dbReference>
<dbReference type="SMR" id="P58567"/>
<dbReference type="STRING" id="103690.gene:10494544"/>
<dbReference type="GeneID" id="58723100"/>
<dbReference type="KEGG" id="ana:asr2513"/>
<dbReference type="eggNOG" id="COG4231">
    <property type="taxonomic scope" value="Bacteria"/>
</dbReference>
<dbReference type="OrthoDB" id="9810688at2"/>
<dbReference type="Proteomes" id="UP000002483">
    <property type="component" value="Chromosome"/>
</dbReference>
<dbReference type="GO" id="GO:0051539">
    <property type="term" value="F:4 iron, 4 sulfur cluster binding"/>
    <property type="evidence" value="ECO:0007669"/>
    <property type="project" value="UniProtKB-KW"/>
</dbReference>
<dbReference type="GO" id="GO:0046872">
    <property type="term" value="F:metal ion binding"/>
    <property type="evidence" value="ECO:0007669"/>
    <property type="project" value="UniProtKB-KW"/>
</dbReference>
<dbReference type="GO" id="GO:0009399">
    <property type="term" value="P:nitrogen fixation"/>
    <property type="evidence" value="ECO:0007669"/>
    <property type="project" value="UniProtKB-KW"/>
</dbReference>
<dbReference type="Gene3D" id="3.30.70.20">
    <property type="match status" value="2"/>
</dbReference>
<dbReference type="InterPro" id="IPR017896">
    <property type="entry name" value="4Fe4S_Fe-S-bd"/>
</dbReference>
<dbReference type="InterPro" id="IPR017900">
    <property type="entry name" value="4Fe4S_Fe_S_CS"/>
</dbReference>
<dbReference type="InterPro" id="IPR014283">
    <property type="entry name" value="FdIII_4_nif"/>
</dbReference>
<dbReference type="InterPro" id="IPR050572">
    <property type="entry name" value="Fe-S_Ferredoxin"/>
</dbReference>
<dbReference type="NCBIfam" id="TIGR02936">
    <property type="entry name" value="fdxN_nitrog"/>
    <property type="match status" value="1"/>
</dbReference>
<dbReference type="PANTHER" id="PTHR43687">
    <property type="entry name" value="ADENYLYLSULFATE REDUCTASE, BETA SUBUNIT"/>
    <property type="match status" value="1"/>
</dbReference>
<dbReference type="PANTHER" id="PTHR43687:SF1">
    <property type="entry name" value="FERREDOXIN III"/>
    <property type="match status" value="1"/>
</dbReference>
<dbReference type="Pfam" id="PF12838">
    <property type="entry name" value="Fer4_7"/>
    <property type="match status" value="1"/>
</dbReference>
<dbReference type="SUPFAM" id="SSF54862">
    <property type="entry name" value="4Fe-4S ferredoxins"/>
    <property type="match status" value="1"/>
</dbReference>
<dbReference type="PROSITE" id="PS00198">
    <property type="entry name" value="4FE4S_FER_1"/>
    <property type="match status" value="2"/>
</dbReference>
<dbReference type="PROSITE" id="PS51379">
    <property type="entry name" value="4FE4S_FER_2"/>
    <property type="match status" value="2"/>
</dbReference>
<name>FER3_NOSS1</name>
<evidence type="ECO:0000250" key="1"/>
<evidence type="ECO:0000255" key="2">
    <source>
        <dbReference type="PROSITE-ProRule" id="PRU00711"/>
    </source>
</evidence>
<accession>P58567</accession>
<gene>
    <name type="primary">fdxB</name>
    <name type="ordered locus">asr2513</name>
</gene>
<feature type="chain" id="PRO_0000159185" description="Ferredoxin-3">
    <location>
        <begin position="1"/>
        <end position="97"/>
    </location>
</feature>
<feature type="domain" description="4Fe-4S ferredoxin-type 1" evidence="2">
    <location>
        <begin position="18"/>
        <end position="47"/>
    </location>
</feature>
<feature type="domain" description="4Fe-4S ferredoxin-type 2" evidence="2">
    <location>
        <begin position="65"/>
        <end position="95"/>
    </location>
</feature>
<feature type="binding site" evidence="1">
    <location>
        <position position="27"/>
    </location>
    <ligand>
        <name>[4Fe-4S] cluster</name>
        <dbReference type="ChEBI" id="CHEBI:49883"/>
        <label>1</label>
    </ligand>
</feature>
<feature type="binding site" evidence="1">
    <location>
        <position position="30"/>
    </location>
    <ligand>
        <name>[4Fe-4S] cluster</name>
        <dbReference type="ChEBI" id="CHEBI:49883"/>
        <label>1</label>
    </ligand>
</feature>
<feature type="binding site" evidence="1">
    <location>
        <position position="33"/>
    </location>
    <ligand>
        <name>[4Fe-4S] cluster</name>
        <dbReference type="ChEBI" id="CHEBI:49883"/>
        <label>1</label>
    </ligand>
</feature>
<feature type="binding site" evidence="1">
    <location>
        <position position="37"/>
    </location>
    <ligand>
        <name>[4Fe-4S] cluster</name>
        <dbReference type="ChEBI" id="CHEBI:49883"/>
        <label>1</label>
    </ligand>
</feature>
<feature type="binding site" evidence="1">
    <location>
        <position position="75"/>
    </location>
    <ligand>
        <name>[4Fe-4S] cluster</name>
        <dbReference type="ChEBI" id="CHEBI:49883"/>
        <label>2</label>
    </ligand>
</feature>
<feature type="binding site" evidence="1">
    <location>
        <position position="78"/>
    </location>
    <ligand>
        <name>[4Fe-4S] cluster</name>
        <dbReference type="ChEBI" id="CHEBI:49883"/>
        <label>2</label>
    </ligand>
</feature>
<feature type="binding site" evidence="1">
    <location>
        <position position="81"/>
    </location>
    <ligand>
        <name>[4Fe-4S] cluster</name>
        <dbReference type="ChEBI" id="CHEBI:49883"/>
        <label>2</label>
    </ligand>
</feature>
<feature type="binding site" evidence="1">
    <location>
        <position position="85"/>
    </location>
    <ligand>
        <name>[4Fe-4S] cluster</name>
        <dbReference type="ChEBI" id="CHEBI:49883"/>
        <label>2</label>
    </ligand>
</feature>
<sequence length="97" mass="10739">MAVLTGLTFGGNTWTPKFAESIDKDKCIGCGRCIKVCGYPVLDLKALNEEGEFVEDEEDDEIERKVMVVAHPENCIGCQACARICPKNCYTHNPLEN</sequence>
<keyword id="KW-0004">4Fe-4S</keyword>
<keyword id="KW-0249">Electron transport</keyword>
<keyword id="KW-0408">Iron</keyword>
<keyword id="KW-0411">Iron-sulfur</keyword>
<keyword id="KW-0479">Metal-binding</keyword>
<keyword id="KW-0535">Nitrogen fixation</keyword>
<keyword id="KW-1185">Reference proteome</keyword>
<keyword id="KW-0677">Repeat</keyword>
<keyword id="KW-0813">Transport</keyword>